<sequence>MLPKNAIEKIQANVSKPCFWKSLSPGQTWKSKSMRIIPEDFVRRTRGAFEHRVVFSVRWENSWQLWLEREKNELFMIEEDWNEFVDDNHLGPNDNLFIKHDETMNLEVQIFKNNGVEIIDVPLGVEPETEPFHPTPKKPHKETTPASSFASGSGCSANGGTNGRGKQRSSDVKNPERYLLNPENPYFVQAVTKRNDVLYVSRPVVQSYRLKFGPVKSTITYLLPGEKKEEGENRIYNGKPCFSGWSVLCRRHNLNIGDSVVCELERSGGVVTAVRVHFVKKD</sequence>
<reference key="1">
    <citation type="journal article" date="2000" name="Nature">
        <title>Sequence and analysis of chromosome 5 of the plant Arabidopsis thaliana.</title>
        <authorList>
            <person name="Tabata S."/>
            <person name="Kaneko T."/>
            <person name="Nakamura Y."/>
            <person name="Kotani H."/>
            <person name="Kato T."/>
            <person name="Asamizu E."/>
            <person name="Miyajima N."/>
            <person name="Sasamoto S."/>
            <person name="Kimura T."/>
            <person name="Hosouchi T."/>
            <person name="Kawashima K."/>
            <person name="Kohara M."/>
            <person name="Matsumoto M."/>
            <person name="Matsuno A."/>
            <person name="Muraki A."/>
            <person name="Nakayama S."/>
            <person name="Nakazaki N."/>
            <person name="Naruo K."/>
            <person name="Okumura S."/>
            <person name="Shinpo S."/>
            <person name="Takeuchi C."/>
            <person name="Wada T."/>
            <person name="Watanabe A."/>
            <person name="Yamada M."/>
            <person name="Yasuda M."/>
            <person name="Sato S."/>
            <person name="de la Bastide M."/>
            <person name="Huang E."/>
            <person name="Spiegel L."/>
            <person name="Gnoj L."/>
            <person name="O'Shaughnessy A."/>
            <person name="Preston R."/>
            <person name="Habermann K."/>
            <person name="Murray J."/>
            <person name="Johnson D."/>
            <person name="Rohlfing T."/>
            <person name="Nelson J."/>
            <person name="Stoneking T."/>
            <person name="Pepin K."/>
            <person name="Spieth J."/>
            <person name="Sekhon M."/>
            <person name="Armstrong J."/>
            <person name="Becker M."/>
            <person name="Belter E."/>
            <person name="Cordum H."/>
            <person name="Cordes M."/>
            <person name="Courtney L."/>
            <person name="Courtney W."/>
            <person name="Dante M."/>
            <person name="Du H."/>
            <person name="Edwards J."/>
            <person name="Fryman J."/>
            <person name="Haakensen B."/>
            <person name="Lamar E."/>
            <person name="Latreille P."/>
            <person name="Leonard S."/>
            <person name="Meyer R."/>
            <person name="Mulvaney E."/>
            <person name="Ozersky P."/>
            <person name="Riley A."/>
            <person name="Strowmatt C."/>
            <person name="Wagner-McPherson C."/>
            <person name="Wollam A."/>
            <person name="Yoakum M."/>
            <person name="Bell M."/>
            <person name="Dedhia N."/>
            <person name="Parnell L."/>
            <person name="Shah R."/>
            <person name="Rodriguez M."/>
            <person name="Hoon See L."/>
            <person name="Vil D."/>
            <person name="Baker J."/>
            <person name="Kirchoff K."/>
            <person name="Toth K."/>
            <person name="King L."/>
            <person name="Bahret A."/>
            <person name="Miller B."/>
            <person name="Marra M.A."/>
            <person name="Martienssen R."/>
            <person name="McCombie W.R."/>
            <person name="Wilson R.K."/>
            <person name="Murphy G."/>
            <person name="Bancroft I."/>
            <person name="Volckaert G."/>
            <person name="Wambutt R."/>
            <person name="Duesterhoeft A."/>
            <person name="Stiekema W."/>
            <person name="Pohl T."/>
            <person name="Entian K.-D."/>
            <person name="Terryn N."/>
            <person name="Hartley N."/>
            <person name="Bent E."/>
            <person name="Johnson S."/>
            <person name="Langham S.-A."/>
            <person name="McCullagh B."/>
            <person name="Robben J."/>
            <person name="Grymonprez B."/>
            <person name="Zimmermann W."/>
            <person name="Ramsperger U."/>
            <person name="Wedler H."/>
            <person name="Balke K."/>
            <person name="Wedler E."/>
            <person name="Peters S."/>
            <person name="van Staveren M."/>
            <person name="Dirkse W."/>
            <person name="Mooijman P."/>
            <person name="Klein Lankhorst R."/>
            <person name="Weitzenegger T."/>
            <person name="Bothe G."/>
            <person name="Rose M."/>
            <person name="Hauf J."/>
            <person name="Berneiser S."/>
            <person name="Hempel S."/>
            <person name="Feldpausch M."/>
            <person name="Lamberth S."/>
            <person name="Villarroel R."/>
            <person name="Gielen J."/>
            <person name="Ardiles W."/>
            <person name="Bents O."/>
            <person name="Lemcke K."/>
            <person name="Kolesov G."/>
            <person name="Mayer K.F.X."/>
            <person name="Rudd S."/>
            <person name="Schoof H."/>
            <person name="Schueller C."/>
            <person name="Zaccaria P."/>
            <person name="Mewes H.-W."/>
            <person name="Bevan M."/>
            <person name="Fransz P.F."/>
        </authorList>
    </citation>
    <scope>NUCLEOTIDE SEQUENCE [LARGE SCALE GENOMIC DNA]</scope>
    <source>
        <strain>cv. Columbia</strain>
    </source>
</reference>
<reference key="2">
    <citation type="journal article" date="2017" name="Plant J.">
        <title>Araport11: a complete reannotation of the Arabidopsis thaliana reference genome.</title>
        <authorList>
            <person name="Cheng C.Y."/>
            <person name="Krishnakumar V."/>
            <person name="Chan A.P."/>
            <person name="Thibaud-Nissen F."/>
            <person name="Schobel S."/>
            <person name="Town C.D."/>
        </authorList>
    </citation>
    <scope>GENOME REANNOTATION</scope>
    <source>
        <strain>cv. Columbia</strain>
    </source>
</reference>
<reference key="3">
    <citation type="journal article" date="2002" name="Science">
        <title>Functional annotation of a full-length Arabidopsis cDNA collection.</title>
        <authorList>
            <person name="Seki M."/>
            <person name="Narusaka M."/>
            <person name="Kamiya A."/>
            <person name="Ishida J."/>
            <person name="Satou M."/>
            <person name="Sakurai T."/>
            <person name="Nakajima M."/>
            <person name="Enju A."/>
            <person name="Akiyama K."/>
            <person name="Oono Y."/>
            <person name="Muramatsu M."/>
            <person name="Hayashizaki Y."/>
            <person name="Kawai J."/>
            <person name="Carninci P."/>
            <person name="Itoh M."/>
            <person name="Ishii Y."/>
            <person name="Arakawa T."/>
            <person name="Shibata K."/>
            <person name="Shinagawa A."/>
            <person name="Shinozaki K."/>
        </authorList>
    </citation>
    <scope>NUCLEOTIDE SEQUENCE [LARGE SCALE MRNA]</scope>
    <source>
        <strain>cv. Columbia</strain>
    </source>
</reference>
<reference key="4">
    <citation type="journal article" date="2003" name="Science">
        <title>Empirical analysis of transcriptional activity in the Arabidopsis genome.</title>
        <authorList>
            <person name="Yamada K."/>
            <person name="Lim J."/>
            <person name="Dale J.M."/>
            <person name="Chen H."/>
            <person name="Shinn P."/>
            <person name="Palm C.J."/>
            <person name="Southwick A.M."/>
            <person name="Wu H.C."/>
            <person name="Kim C.J."/>
            <person name="Nguyen M."/>
            <person name="Pham P.K."/>
            <person name="Cheuk R.F."/>
            <person name="Karlin-Newmann G."/>
            <person name="Liu S.X."/>
            <person name="Lam B."/>
            <person name="Sakano H."/>
            <person name="Wu T."/>
            <person name="Yu G."/>
            <person name="Miranda M."/>
            <person name="Quach H.L."/>
            <person name="Tripp M."/>
            <person name="Chang C.H."/>
            <person name="Lee J.M."/>
            <person name="Toriumi M.J."/>
            <person name="Chan M.M."/>
            <person name="Tang C.C."/>
            <person name="Onodera C.S."/>
            <person name="Deng J.M."/>
            <person name="Akiyama K."/>
            <person name="Ansari Y."/>
            <person name="Arakawa T."/>
            <person name="Banh J."/>
            <person name="Banno F."/>
            <person name="Bowser L."/>
            <person name="Brooks S.Y."/>
            <person name="Carninci P."/>
            <person name="Chao Q."/>
            <person name="Choy N."/>
            <person name="Enju A."/>
            <person name="Goldsmith A.D."/>
            <person name="Gurjal M."/>
            <person name="Hansen N.F."/>
            <person name="Hayashizaki Y."/>
            <person name="Johnson-Hopson C."/>
            <person name="Hsuan V.W."/>
            <person name="Iida K."/>
            <person name="Karnes M."/>
            <person name="Khan S."/>
            <person name="Koesema E."/>
            <person name="Ishida J."/>
            <person name="Jiang P.X."/>
            <person name="Jones T."/>
            <person name="Kawai J."/>
            <person name="Kamiya A."/>
            <person name="Meyers C."/>
            <person name="Nakajima M."/>
            <person name="Narusaka M."/>
            <person name="Seki M."/>
            <person name="Sakurai T."/>
            <person name="Satou M."/>
            <person name="Tamse R."/>
            <person name="Vaysberg M."/>
            <person name="Wallender E.K."/>
            <person name="Wong C."/>
            <person name="Yamamura Y."/>
            <person name="Yuan S."/>
            <person name="Shinozaki K."/>
            <person name="Davis R.W."/>
            <person name="Theologis A."/>
            <person name="Ecker J.R."/>
        </authorList>
    </citation>
    <scope>NUCLEOTIDE SEQUENCE [LARGE SCALE MRNA]</scope>
    <source>
        <strain>cv. Columbia</strain>
    </source>
</reference>
<reference key="5">
    <citation type="submission" date="2004-09" db="EMBL/GenBank/DDBJ databases">
        <title>Large-scale analysis of RIKEN Arabidopsis full-length (RAFL) cDNAs.</title>
        <authorList>
            <person name="Totoki Y."/>
            <person name="Seki M."/>
            <person name="Ishida J."/>
            <person name="Nakajima M."/>
            <person name="Enju A."/>
            <person name="Kamiya A."/>
            <person name="Narusaka M."/>
            <person name="Shin-i T."/>
            <person name="Nakagawa M."/>
            <person name="Sakamoto N."/>
            <person name="Oishi K."/>
            <person name="Kohara Y."/>
            <person name="Kobayashi M."/>
            <person name="Toyoda A."/>
            <person name="Sakaki Y."/>
            <person name="Sakurai T."/>
            <person name="Iida K."/>
            <person name="Akiyama K."/>
            <person name="Satou M."/>
            <person name="Toyoda T."/>
            <person name="Konagaya A."/>
            <person name="Carninci P."/>
            <person name="Kawai J."/>
            <person name="Hayashizaki Y."/>
            <person name="Shinozaki K."/>
        </authorList>
    </citation>
    <scope>NUCLEOTIDE SEQUENCE [LARGE SCALE MRNA]</scope>
    <source>
        <strain>cv. Columbia</strain>
    </source>
</reference>
<reference key="6">
    <citation type="submission" date="2002-03" db="EMBL/GenBank/DDBJ databases">
        <title>Full-length cDNA from Arabidopsis thaliana.</title>
        <authorList>
            <person name="Brover V.V."/>
            <person name="Troukhan M.E."/>
            <person name="Alexandrov N.A."/>
            <person name="Lu Y.-P."/>
            <person name="Flavell R.B."/>
            <person name="Feldmann K.A."/>
        </authorList>
    </citation>
    <scope>NUCLEOTIDE SEQUENCE [LARGE SCALE MRNA]</scope>
</reference>
<reference key="7">
    <citation type="journal article" date="2008" name="Trends Plant Sci.">
        <title>The plant B3 superfamily.</title>
        <authorList>
            <person name="Swaminathan K."/>
            <person name="Peterson K."/>
            <person name="Jack T."/>
        </authorList>
    </citation>
    <scope>GENE FAMILY</scope>
</reference>
<organism>
    <name type="scientific">Arabidopsis thaliana</name>
    <name type="common">Mouse-ear cress</name>
    <dbReference type="NCBI Taxonomy" id="3702"/>
    <lineage>
        <taxon>Eukaryota</taxon>
        <taxon>Viridiplantae</taxon>
        <taxon>Streptophyta</taxon>
        <taxon>Embryophyta</taxon>
        <taxon>Tracheophyta</taxon>
        <taxon>Spermatophyta</taxon>
        <taxon>Magnoliopsida</taxon>
        <taxon>eudicotyledons</taxon>
        <taxon>Gunneridae</taxon>
        <taxon>Pentapetalae</taxon>
        <taxon>rosids</taxon>
        <taxon>malvids</taxon>
        <taxon>Brassicales</taxon>
        <taxon>Brassicaceae</taxon>
        <taxon>Camelineae</taxon>
        <taxon>Arabidopsis</taxon>
    </lineage>
</organism>
<protein>
    <recommendedName>
        <fullName>B3 domain-containing protein At5g25475</fullName>
    </recommendedName>
</protein>
<accession>Q680D9</accession>
<accession>Q8GZ90</accession>
<accession>Q8LBK4</accession>
<evidence type="ECO:0000255" key="1">
    <source>
        <dbReference type="PROSITE-ProRule" id="PRU00326"/>
    </source>
</evidence>
<evidence type="ECO:0000256" key="2">
    <source>
        <dbReference type="SAM" id="MobiDB-lite"/>
    </source>
</evidence>
<evidence type="ECO:0000305" key="3"/>
<dbReference type="EMBL" id="AC006601">
    <property type="status" value="NOT_ANNOTATED_CDS"/>
    <property type="molecule type" value="Genomic_DNA"/>
</dbReference>
<dbReference type="EMBL" id="CP002688">
    <property type="protein sequence ID" value="AED93449.1"/>
    <property type="molecule type" value="Genomic_DNA"/>
</dbReference>
<dbReference type="EMBL" id="CP002688">
    <property type="protein sequence ID" value="AED93450.1"/>
    <property type="molecule type" value="Genomic_DNA"/>
</dbReference>
<dbReference type="EMBL" id="CP002688">
    <property type="protein sequence ID" value="AED93451.1"/>
    <property type="molecule type" value="Genomic_DNA"/>
</dbReference>
<dbReference type="EMBL" id="AK117142">
    <property type="protein sequence ID" value="BAC41820.1"/>
    <property type="status" value="ALT_FRAME"/>
    <property type="molecule type" value="mRNA"/>
</dbReference>
<dbReference type="EMBL" id="BT005232">
    <property type="protein sequence ID" value="AAO63296.1"/>
    <property type="status" value="ALT_FRAME"/>
    <property type="molecule type" value="mRNA"/>
</dbReference>
<dbReference type="EMBL" id="AK175928">
    <property type="protein sequence ID" value="BAD43691.1"/>
    <property type="molecule type" value="mRNA"/>
</dbReference>
<dbReference type="EMBL" id="AK176451">
    <property type="protein sequence ID" value="BAD44214.1"/>
    <property type="status" value="ALT_FRAME"/>
    <property type="molecule type" value="mRNA"/>
</dbReference>
<dbReference type="EMBL" id="AY087156">
    <property type="protein sequence ID" value="AAM64714.1"/>
    <property type="molecule type" value="mRNA"/>
</dbReference>
<dbReference type="RefSeq" id="NP_001078620.1">
    <molecule id="Q680D9-1"/>
    <property type="nucleotide sequence ID" value="NM_001085151.2"/>
</dbReference>
<dbReference type="RefSeq" id="NP_568473.1">
    <molecule id="Q680D9-1"/>
    <property type="nucleotide sequence ID" value="NM_122458.6"/>
</dbReference>
<dbReference type="RefSeq" id="NP_851075.1">
    <molecule id="Q680D9-1"/>
    <property type="nucleotide sequence ID" value="NM_180744.4"/>
</dbReference>
<dbReference type="SMR" id="Q680D9"/>
<dbReference type="BioGRID" id="17897">
    <property type="interactions" value="9"/>
</dbReference>
<dbReference type="FunCoup" id="Q680D9">
    <property type="interactions" value="46"/>
</dbReference>
<dbReference type="IntAct" id="Q680D9">
    <property type="interactions" value="8"/>
</dbReference>
<dbReference type="STRING" id="3702.Q680D9"/>
<dbReference type="iPTMnet" id="Q680D9"/>
<dbReference type="ProteomicsDB" id="243115">
    <molecule id="Q680D9-1"/>
</dbReference>
<dbReference type="EnsemblPlants" id="AT5G25475.1">
    <molecule id="Q680D9-1"/>
    <property type="protein sequence ID" value="AT5G25475.1"/>
    <property type="gene ID" value="AT5G25475"/>
</dbReference>
<dbReference type="EnsemblPlants" id="AT5G25475.2">
    <molecule id="Q680D9-1"/>
    <property type="protein sequence ID" value="AT5G25475.2"/>
    <property type="gene ID" value="AT5G25475"/>
</dbReference>
<dbReference type="EnsemblPlants" id="AT5G25475.3">
    <molecule id="Q680D9-1"/>
    <property type="protein sequence ID" value="AT5G25475.3"/>
    <property type="gene ID" value="AT5G25475"/>
</dbReference>
<dbReference type="GeneID" id="832622"/>
<dbReference type="Gramene" id="AT5G25475.1">
    <molecule id="Q680D9-1"/>
    <property type="protein sequence ID" value="AT5G25475.1"/>
    <property type="gene ID" value="AT5G25475"/>
</dbReference>
<dbReference type="Gramene" id="AT5G25475.2">
    <molecule id="Q680D9-1"/>
    <property type="protein sequence ID" value="AT5G25475.2"/>
    <property type="gene ID" value="AT5G25475"/>
</dbReference>
<dbReference type="Gramene" id="AT5G25475.3">
    <molecule id="Q680D9-1"/>
    <property type="protein sequence ID" value="AT5G25475.3"/>
    <property type="gene ID" value="AT5G25475"/>
</dbReference>
<dbReference type="KEGG" id="ath:AT5G25475"/>
<dbReference type="Araport" id="AT5G25475"/>
<dbReference type="TAIR" id="AT5G25475"/>
<dbReference type="InParanoid" id="Q680D9"/>
<dbReference type="OMA" id="FTHVDTM"/>
<dbReference type="PhylomeDB" id="Q680D9"/>
<dbReference type="PRO" id="PR:Q680D9"/>
<dbReference type="Proteomes" id="UP000006548">
    <property type="component" value="Chromosome 5"/>
</dbReference>
<dbReference type="ExpressionAtlas" id="Q680D9">
    <property type="expression patterns" value="baseline and differential"/>
</dbReference>
<dbReference type="GO" id="GO:0005634">
    <property type="term" value="C:nucleus"/>
    <property type="evidence" value="ECO:0007669"/>
    <property type="project" value="UniProtKB-SubCell"/>
</dbReference>
<dbReference type="GO" id="GO:0003677">
    <property type="term" value="F:DNA binding"/>
    <property type="evidence" value="ECO:0007669"/>
    <property type="project" value="UniProtKB-KW"/>
</dbReference>
<dbReference type="CDD" id="cd10017">
    <property type="entry name" value="B3_DNA"/>
    <property type="match status" value="1"/>
</dbReference>
<dbReference type="Gene3D" id="2.40.330.10">
    <property type="entry name" value="DNA-binding pseudobarrel domain"/>
    <property type="match status" value="2"/>
</dbReference>
<dbReference type="InterPro" id="IPR003340">
    <property type="entry name" value="B3_DNA-bd"/>
</dbReference>
<dbReference type="InterPro" id="IPR015300">
    <property type="entry name" value="DNA-bd_pseudobarrel_sf"/>
</dbReference>
<dbReference type="InterPro" id="IPR050655">
    <property type="entry name" value="Plant_B3_domain"/>
</dbReference>
<dbReference type="PANTHER" id="PTHR31920">
    <property type="entry name" value="B3 DOMAIN-CONTAINING"/>
    <property type="match status" value="1"/>
</dbReference>
<dbReference type="PANTHER" id="PTHR31920:SF125">
    <property type="entry name" value="TF-B3 DOMAIN-CONTAINING PROTEIN"/>
    <property type="match status" value="1"/>
</dbReference>
<dbReference type="Pfam" id="PF02362">
    <property type="entry name" value="B3"/>
    <property type="match status" value="1"/>
</dbReference>
<dbReference type="SMART" id="SM01019">
    <property type="entry name" value="B3"/>
    <property type="match status" value="2"/>
</dbReference>
<dbReference type="SUPFAM" id="SSF101936">
    <property type="entry name" value="DNA-binding pseudobarrel domain"/>
    <property type="match status" value="2"/>
</dbReference>
<dbReference type="PROSITE" id="PS50863">
    <property type="entry name" value="B3"/>
    <property type="match status" value="1"/>
</dbReference>
<gene>
    <name type="ordered locus">At5g25475</name>
    <name type="ORF">T14C9.1</name>
</gene>
<feature type="chain" id="PRO_0000375155" description="B3 domain-containing protein At5g25475">
    <location>
        <begin position="1"/>
        <end position="282"/>
    </location>
</feature>
<feature type="DNA-binding region" description="TF-B3" evidence="1">
    <location>
        <begin position="20"/>
        <end position="114"/>
    </location>
</feature>
<feature type="region of interest" description="Disordered" evidence="2">
    <location>
        <begin position="127"/>
        <end position="178"/>
    </location>
</feature>
<feature type="compositionally biased region" description="Low complexity" evidence="2">
    <location>
        <begin position="144"/>
        <end position="159"/>
    </location>
</feature>
<feature type="sequence conflict" description="In Ref. 6; AAM64714." evidence="3" ref="6">
    <original>G</original>
    <variation>R</variation>
    <location>
        <position position="154"/>
    </location>
</feature>
<feature type="sequence conflict" description="In Ref. 6; AAM64714." evidence="3" ref="6">
    <original>G</original>
    <variation>A</variation>
    <location>
        <position position="165"/>
    </location>
</feature>
<comment type="subcellular location">
    <subcellularLocation>
        <location evidence="1">Nucleus</location>
    </subcellularLocation>
</comment>
<comment type="alternative products">
    <event type="alternative splicing"/>
    <isoform>
        <id>Q680D9-1</id>
        <name>1</name>
        <sequence type="displayed"/>
    </isoform>
    <text>A number of isoforms are produced. According to EST sequences.</text>
</comment>
<comment type="sequence caution" evidence="3">
    <conflict type="frameshift">
        <sequence resource="EMBL-CDS" id="AAO63296"/>
    </conflict>
</comment>
<comment type="sequence caution" evidence="3">
    <conflict type="frameshift">
        <sequence resource="EMBL-CDS" id="BAC41820"/>
    </conflict>
</comment>
<comment type="sequence caution" evidence="3">
    <conflict type="frameshift">
        <sequence resource="EMBL-CDS" id="BAD44214"/>
    </conflict>
</comment>
<proteinExistence type="evidence at transcript level"/>
<keyword id="KW-0025">Alternative splicing</keyword>
<keyword id="KW-0238">DNA-binding</keyword>
<keyword id="KW-0539">Nucleus</keyword>
<keyword id="KW-1185">Reference proteome</keyword>
<keyword id="KW-0804">Transcription</keyword>
<keyword id="KW-0805">Transcription regulation</keyword>
<name>Y5475_ARATH</name>